<gene>
    <name type="primary">Nat8l</name>
</gene>
<reference key="1">
    <citation type="submission" date="2005-08" db="EMBL/GenBank/DDBJ databases">
        <authorList>
            <person name="Mural R.J."/>
            <person name="Adams M.D."/>
            <person name="Myers E.W."/>
            <person name="Smith H.O."/>
            <person name="Venter J.C."/>
        </authorList>
    </citation>
    <scope>NUCLEOTIDE SEQUENCE [LARGE SCALE GENOMIC DNA]</scope>
</reference>
<reference key="2">
    <citation type="journal article" date="2008" name="Brain Res.">
        <title>N-acetylaspartate synthesis in the brain: mitochondria vs. microsomes.</title>
        <authorList>
            <person name="Ariyannur P.S."/>
            <person name="Madhavarao C.N."/>
            <person name="Namboodiri A.M."/>
        </authorList>
    </citation>
    <scope>SUBCELLULAR LOCATION</scope>
    <scope>FUNCTION</scope>
    <scope>CATALYTIC ACTIVITY</scope>
</reference>
<reference key="3">
    <citation type="journal article" date="2010" name="Brain Res.">
        <title>Methamphetamine-induced neuronal protein NAT8L is the NAA biosynthetic enzyme: implications for specialized acetyl coenzyme A metabolism in the CNS.</title>
        <authorList>
            <person name="Ariyannur P.S."/>
            <person name="Moffett J.R."/>
            <person name="Manickam P."/>
            <person name="Pattabiraman N."/>
            <person name="Arun P."/>
            <person name="Nitta A."/>
            <person name="Nabeshima T."/>
            <person name="Madhavarao C.N."/>
            <person name="Namboodiri A.M."/>
        </authorList>
    </citation>
    <scope>TISSUE SPECIFICITY</scope>
</reference>
<evidence type="ECO:0000250" key="1">
    <source>
        <dbReference type="UniProtKB" id="Q3UGX3"/>
    </source>
</evidence>
<evidence type="ECO:0000250" key="2">
    <source>
        <dbReference type="UniProtKB" id="Q8N9F0"/>
    </source>
</evidence>
<evidence type="ECO:0000255" key="3"/>
<evidence type="ECO:0000255" key="4">
    <source>
        <dbReference type="PROSITE-ProRule" id="PRU00532"/>
    </source>
</evidence>
<evidence type="ECO:0000256" key="5">
    <source>
        <dbReference type="SAM" id="MobiDB-lite"/>
    </source>
</evidence>
<evidence type="ECO:0000269" key="6">
    <source>
    </source>
</evidence>
<evidence type="ECO:0000269" key="7">
    <source>
    </source>
</evidence>
<evidence type="ECO:0000305" key="8"/>
<evidence type="ECO:0000305" key="9">
    <source>
    </source>
</evidence>
<accession>D3ZVU9</accession>
<keyword id="KW-0012">Acyltransferase</keyword>
<keyword id="KW-0963">Cytoplasm</keyword>
<keyword id="KW-0256">Endoplasmic reticulum</keyword>
<keyword id="KW-0472">Membrane</keyword>
<keyword id="KW-0492">Microsome</keyword>
<keyword id="KW-0496">Mitochondrion</keyword>
<keyword id="KW-1185">Reference proteome</keyword>
<keyword id="KW-0808">Transferase</keyword>
<keyword id="KW-0812">Transmembrane</keyword>
<keyword id="KW-1133">Transmembrane helix</keyword>
<protein>
    <recommendedName>
        <fullName>N-acetylaspartate synthetase</fullName>
        <shortName>NAA synthetase</shortName>
    </recommendedName>
    <alternativeName>
        <fullName>N-acetyltransferase 8-like protein</fullName>
        <ecNumber evidence="6">2.3.1.17</ecNumber>
    </alternativeName>
</protein>
<feature type="chain" id="PRO_0000406989" description="N-acetylaspartate synthetase">
    <location>
        <begin position="1"/>
        <end position="299"/>
    </location>
</feature>
<feature type="transmembrane region" description="Helical" evidence="3">
    <location>
        <begin position="118"/>
        <end position="138"/>
    </location>
</feature>
<feature type="domain" description="N-acetyltransferase" evidence="4">
    <location>
        <begin position="143"/>
        <end position="280"/>
    </location>
</feature>
<feature type="region of interest" description="Disordered" evidence="5">
    <location>
        <begin position="44"/>
        <end position="70"/>
    </location>
</feature>
<feature type="compositionally biased region" description="Pro residues" evidence="5">
    <location>
        <begin position="44"/>
        <end position="57"/>
    </location>
</feature>
<feature type="compositionally biased region" description="Gly residues" evidence="5">
    <location>
        <begin position="60"/>
        <end position="70"/>
    </location>
</feature>
<sequence length="299" mass="32719">MHCGPPDMVCETKIVATEDHEALPGAKKDALLAAAGAMWPPLPAAPGPAAAPPPAAGPQPHGGTGGAGPPEGRGVCIREFRAAEQEAARRIFYDGILERIPNTAFRGLRQHPRTQLLYALLAALCFAVTRSLLLTCLVPAGLLALRYYYSRKVILAYLECALHTDMADIEQYYMKPPGSCFWVAVLDGNVVGIVAARAHEEDNTVELLRMSVDSRFRGKGIAKALGRRVLEFAMLHNYSAVVLGTTAVKVAAHKLYESLGFRHMGASDHYVLPGMTLSLAERLFFQVRYHRYRLQLREE</sequence>
<dbReference type="EC" id="2.3.1.17" evidence="6"/>
<dbReference type="EMBL" id="CH473963">
    <property type="protein sequence ID" value="EDM00108.1"/>
    <property type="molecule type" value="Genomic_DNA"/>
</dbReference>
<dbReference type="RefSeq" id="NP_001178610.1">
    <property type="nucleotide sequence ID" value="NM_001191681.1"/>
</dbReference>
<dbReference type="SMR" id="D3ZVU9"/>
<dbReference type="FunCoup" id="D3ZVU9">
    <property type="interactions" value="187"/>
</dbReference>
<dbReference type="STRING" id="10116.ENSRNOP00000066413"/>
<dbReference type="PhosphoSitePlus" id="D3ZVU9"/>
<dbReference type="PaxDb" id="10116-ENSRNOP00000066413"/>
<dbReference type="Ensembl" id="ENSRNOT00000074734.2">
    <property type="protein sequence ID" value="ENSRNOP00000066413.1"/>
    <property type="gene ID" value="ENSRNOG00000049351.2"/>
</dbReference>
<dbReference type="GeneID" id="289727"/>
<dbReference type="KEGG" id="rno:289727"/>
<dbReference type="AGR" id="RGD:1305719"/>
<dbReference type="CTD" id="339983"/>
<dbReference type="RGD" id="1305719">
    <property type="gene designation" value="Nat8l"/>
</dbReference>
<dbReference type="eggNOG" id="KOG3139">
    <property type="taxonomic scope" value="Eukaryota"/>
</dbReference>
<dbReference type="GeneTree" id="ENSGT00950000182932"/>
<dbReference type="HOGENOM" id="CLU_013985_10_0_1"/>
<dbReference type="InParanoid" id="D3ZVU9"/>
<dbReference type="OMA" id="FHEGIME"/>
<dbReference type="OrthoDB" id="41532at2759"/>
<dbReference type="PhylomeDB" id="D3ZVU9"/>
<dbReference type="TreeFam" id="TF324687"/>
<dbReference type="Reactome" id="R-RNO-8963693">
    <property type="pathway name" value="Aspartate and asparagine metabolism"/>
</dbReference>
<dbReference type="PRO" id="PR:D3ZVU9"/>
<dbReference type="Proteomes" id="UP000002494">
    <property type="component" value="Chromosome 14"/>
</dbReference>
<dbReference type="Proteomes" id="UP000234681">
    <property type="component" value="Chromosome 14"/>
</dbReference>
<dbReference type="Bgee" id="ENSRNOG00000049351">
    <property type="expression patterns" value="Expressed in frontal cortex and 15 other cell types or tissues"/>
</dbReference>
<dbReference type="GO" id="GO:0005737">
    <property type="term" value="C:cytoplasm"/>
    <property type="evidence" value="ECO:0000266"/>
    <property type="project" value="RGD"/>
</dbReference>
<dbReference type="GO" id="GO:0005789">
    <property type="term" value="C:endoplasmic reticulum membrane"/>
    <property type="evidence" value="ECO:0000266"/>
    <property type="project" value="RGD"/>
</dbReference>
<dbReference type="GO" id="GO:0043231">
    <property type="term" value="C:intracellular membrane-bounded organelle"/>
    <property type="evidence" value="ECO:0000314"/>
    <property type="project" value="UniProtKB"/>
</dbReference>
<dbReference type="GO" id="GO:0005759">
    <property type="term" value="C:mitochondrial matrix"/>
    <property type="evidence" value="ECO:0000266"/>
    <property type="project" value="RGD"/>
</dbReference>
<dbReference type="GO" id="GO:0031966">
    <property type="term" value="C:mitochondrial membrane"/>
    <property type="evidence" value="ECO:0000266"/>
    <property type="project" value="RGD"/>
</dbReference>
<dbReference type="GO" id="GO:0005739">
    <property type="term" value="C:mitochondrion"/>
    <property type="evidence" value="ECO:0000314"/>
    <property type="project" value="UniProtKB"/>
</dbReference>
<dbReference type="GO" id="GO:0017188">
    <property type="term" value="F:L-aspartate N-acetyltransferase activity"/>
    <property type="evidence" value="ECO:0000314"/>
    <property type="project" value="UniProtKB"/>
</dbReference>
<dbReference type="GO" id="GO:0006083">
    <property type="term" value="P:acetate metabolic process"/>
    <property type="evidence" value="ECO:0000266"/>
    <property type="project" value="RGD"/>
</dbReference>
<dbReference type="GO" id="GO:0006531">
    <property type="term" value="P:aspartate metabolic process"/>
    <property type="evidence" value="ECO:0000266"/>
    <property type="project" value="RGD"/>
</dbReference>
<dbReference type="GO" id="GO:0051586">
    <property type="term" value="P:positive regulation of dopamine uptake involved in synaptic transmission"/>
    <property type="evidence" value="ECO:0000266"/>
    <property type="project" value="RGD"/>
</dbReference>
<dbReference type="CDD" id="cd04301">
    <property type="entry name" value="NAT_SF"/>
    <property type="match status" value="1"/>
</dbReference>
<dbReference type="FunFam" id="3.40.630.30:FF:000057">
    <property type="entry name" value="N-acetylaspartate synthetase"/>
    <property type="match status" value="1"/>
</dbReference>
<dbReference type="Gene3D" id="3.40.630.30">
    <property type="match status" value="1"/>
</dbReference>
<dbReference type="InterPro" id="IPR016181">
    <property type="entry name" value="Acyl_CoA_acyltransferase"/>
</dbReference>
<dbReference type="InterPro" id="IPR000182">
    <property type="entry name" value="GNAT_dom"/>
</dbReference>
<dbReference type="InterPro" id="IPR050769">
    <property type="entry name" value="NAT_camello-type"/>
</dbReference>
<dbReference type="PANTHER" id="PTHR13947">
    <property type="entry name" value="GNAT FAMILY N-ACETYLTRANSFERASE"/>
    <property type="match status" value="1"/>
</dbReference>
<dbReference type="PANTHER" id="PTHR13947:SF11">
    <property type="entry name" value="N-ACETYLASPARTATE SYNTHETASE"/>
    <property type="match status" value="1"/>
</dbReference>
<dbReference type="Pfam" id="PF00583">
    <property type="entry name" value="Acetyltransf_1"/>
    <property type="match status" value="1"/>
</dbReference>
<dbReference type="SUPFAM" id="SSF55729">
    <property type="entry name" value="Acyl-CoA N-acyltransferases (Nat)"/>
    <property type="match status" value="1"/>
</dbReference>
<dbReference type="PROSITE" id="PS51186">
    <property type="entry name" value="GNAT"/>
    <property type="match status" value="1"/>
</dbReference>
<organism>
    <name type="scientific">Rattus norvegicus</name>
    <name type="common">Rat</name>
    <dbReference type="NCBI Taxonomy" id="10116"/>
    <lineage>
        <taxon>Eukaryota</taxon>
        <taxon>Metazoa</taxon>
        <taxon>Chordata</taxon>
        <taxon>Craniata</taxon>
        <taxon>Vertebrata</taxon>
        <taxon>Euteleostomi</taxon>
        <taxon>Mammalia</taxon>
        <taxon>Eutheria</taxon>
        <taxon>Euarchontoglires</taxon>
        <taxon>Glires</taxon>
        <taxon>Rodentia</taxon>
        <taxon>Myomorpha</taxon>
        <taxon>Muroidea</taxon>
        <taxon>Muridae</taxon>
        <taxon>Murinae</taxon>
        <taxon>Rattus</taxon>
    </lineage>
</organism>
<comment type="function">
    <text evidence="1 2 6">Catalyzes the synthesis of N-acetylaspartate acid (NAA) from L-aspartate and acetyl-CoA (PubMed:18621030). Promotes dopamine uptake by regulating TNF-alpha expression (By similarity). Attenuates methamphetamine-induced inhibition of dopamine uptake (By similarity).</text>
</comment>
<comment type="catalytic activity">
    <reaction evidence="6">
        <text>L-aspartate + acetyl-CoA = N-acetyl-L-aspartate + CoA + H(+)</text>
        <dbReference type="Rhea" id="RHEA:14165"/>
        <dbReference type="ChEBI" id="CHEBI:15378"/>
        <dbReference type="ChEBI" id="CHEBI:16953"/>
        <dbReference type="ChEBI" id="CHEBI:29991"/>
        <dbReference type="ChEBI" id="CHEBI:57287"/>
        <dbReference type="ChEBI" id="CHEBI:57288"/>
        <dbReference type="EC" id="2.3.1.17"/>
    </reaction>
    <physiologicalReaction direction="left-to-right" evidence="9">
        <dbReference type="Rhea" id="RHEA:14166"/>
    </physiologicalReaction>
</comment>
<comment type="activity regulation">
    <text evidence="2">Aminooxyacetic acid (AOAA) blocks its activity in both cytoplasm and mitochondria.</text>
</comment>
<comment type="subcellular location">
    <subcellularLocation>
        <location evidence="2">Cytoplasm</location>
    </subcellularLocation>
    <subcellularLocation>
        <location evidence="6">Microsome membrane</location>
        <topology evidence="3">Single-pass type I membrane protein</topology>
    </subcellularLocation>
    <subcellularLocation>
        <location evidence="6">Mitochondrion membrane</location>
        <topology evidence="3">Single-pass membrane protein</topology>
    </subcellularLocation>
    <subcellularLocation>
        <location evidence="1">Endoplasmic reticulum membrane</location>
        <topology evidence="3">Single-pass membrane protein</topology>
    </subcellularLocation>
</comment>
<comment type="tissue specificity">
    <text evidence="7">Expressed in brain, including in mesencephalic dopaminergic neurons of the substantia nigra and ventral tegmental area and oligodendrocytes. Expressed in cortical pyramidal neurons and granule cells of the hippocampus (at protein level).</text>
</comment>
<comment type="similarity">
    <text evidence="8">Belongs to the NAT8 family.</text>
</comment>
<proteinExistence type="evidence at protein level"/>
<name>NAT8L_RAT</name>